<evidence type="ECO:0000255" key="1">
    <source>
        <dbReference type="HAMAP-Rule" id="MF_01123"/>
    </source>
</evidence>
<comment type="function">
    <text evidence="1">Catalyzes the conversion of acetate into acetyl-CoA (AcCoA), an essential intermediate at the junction of anabolic and catabolic pathways. AcsA undergoes a two-step reaction. In the first half reaction, AcsA combines acetate with ATP to form acetyl-adenylate (AcAMP) intermediate. In the second half reaction, it can then transfer the acetyl group from AcAMP to the sulfhydryl group of CoA, forming the product AcCoA.</text>
</comment>
<comment type="catalytic activity">
    <reaction evidence="1">
        <text>acetate + ATP + CoA = acetyl-CoA + AMP + diphosphate</text>
        <dbReference type="Rhea" id="RHEA:23176"/>
        <dbReference type="ChEBI" id="CHEBI:30089"/>
        <dbReference type="ChEBI" id="CHEBI:30616"/>
        <dbReference type="ChEBI" id="CHEBI:33019"/>
        <dbReference type="ChEBI" id="CHEBI:57287"/>
        <dbReference type="ChEBI" id="CHEBI:57288"/>
        <dbReference type="ChEBI" id="CHEBI:456215"/>
        <dbReference type="EC" id="6.2.1.1"/>
    </reaction>
</comment>
<comment type="cofactor">
    <cofactor evidence="1">
        <name>Mg(2+)</name>
        <dbReference type="ChEBI" id="CHEBI:18420"/>
    </cofactor>
</comment>
<comment type="PTM">
    <text evidence="1">Acetylated. Deacetylation by the SIR2-homolog deacetylase activates the enzyme.</text>
</comment>
<comment type="similarity">
    <text evidence="1">Belongs to the ATP-dependent AMP-binding enzyme family.</text>
</comment>
<organism>
    <name type="scientific">Methylobacillus flagellatus (strain ATCC 51484 / DSM 6875 / VKM B-1610 / KT)</name>
    <dbReference type="NCBI Taxonomy" id="265072"/>
    <lineage>
        <taxon>Bacteria</taxon>
        <taxon>Pseudomonadati</taxon>
        <taxon>Pseudomonadota</taxon>
        <taxon>Betaproteobacteria</taxon>
        <taxon>Nitrosomonadales</taxon>
        <taxon>Methylophilaceae</taxon>
        <taxon>Methylobacillus</taxon>
    </lineage>
</organism>
<protein>
    <recommendedName>
        <fullName evidence="1">Acetyl-coenzyme A synthetase</fullName>
        <shortName evidence="1">AcCoA synthetase</shortName>
        <shortName evidence="1">Acs</shortName>
        <ecNumber evidence="1">6.2.1.1</ecNumber>
    </recommendedName>
    <alternativeName>
        <fullName evidence="1">Acetate--CoA ligase</fullName>
    </alternativeName>
    <alternativeName>
        <fullName evidence="1">Acyl-activating enzyme</fullName>
    </alternativeName>
</protein>
<dbReference type="EC" id="6.2.1.1" evidence="1"/>
<dbReference type="EMBL" id="CP000284">
    <property type="protein sequence ID" value="ABE49995.1"/>
    <property type="molecule type" value="Genomic_DNA"/>
</dbReference>
<dbReference type="RefSeq" id="WP_011479949.1">
    <property type="nucleotide sequence ID" value="NC_007947.1"/>
</dbReference>
<dbReference type="SMR" id="Q1H0J2"/>
<dbReference type="STRING" id="265072.Mfla_1727"/>
<dbReference type="KEGG" id="mfa:Mfla_1727"/>
<dbReference type="eggNOG" id="COG0365">
    <property type="taxonomic scope" value="Bacteria"/>
</dbReference>
<dbReference type="HOGENOM" id="CLU_000022_3_6_4"/>
<dbReference type="OrthoDB" id="9766486at2"/>
<dbReference type="Proteomes" id="UP000002440">
    <property type="component" value="Chromosome"/>
</dbReference>
<dbReference type="GO" id="GO:0005829">
    <property type="term" value="C:cytosol"/>
    <property type="evidence" value="ECO:0007669"/>
    <property type="project" value="TreeGrafter"/>
</dbReference>
<dbReference type="GO" id="GO:0003987">
    <property type="term" value="F:acetate-CoA ligase activity"/>
    <property type="evidence" value="ECO:0007669"/>
    <property type="project" value="UniProtKB-UniRule"/>
</dbReference>
<dbReference type="GO" id="GO:0016208">
    <property type="term" value="F:AMP binding"/>
    <property type="evidence" value="ECO:0007669"/>
    <property type="project" value="InterPro"/>
</dbReference>
<dbReference type="GO" id="GO:0005524">
    <property type="term" value="F:ATP binding"/>
    <property type="evidence" value="ECO:0007669"/>
    <property type="project" value="UniProtKB-KW"/>
</dbReference>
<dbReference type="GO" id="GO:0046872">
    <property type="term" value="F:metal ion binding"/>
    <property type="evidence" value="ECO:0007669"/>
    <property type="project" value="UniProtKB-KW"/>
</dbReference>
<dbReference type="GO" id="GO:0019427">
    <property type="term" value="P:acetyl-CoA biosynthetic process from acetate"/>
    <property type="evidence" value="ECO:0007669"/>
    <property type="project" value="InterPro"/>
</dbReference>
<dbReference type="CDD" id="cd05966">
    <property type="entry name" value="ACS"/>
    <property type="match status" value="1"/>
</dbReference>
<dbReference type="FunFam" id="3.40.50.12780:FF:000001">
    <property type="entry name" value="Acetyl-coenzyme A synthetase"/>
    <property type="match status" value="1"/>
</dbReference>
<dbReference type="Gene3D" id="3.30.300.30">
    <property type="match status" value="1"/>
</dbReference>
<dbReference type="Gene3D" id="3.40.50.12780">
    <property type="entry name" value="N-terminal domain of ligase-like"/>
    <property type="match status" value="1"/>
</dbReference>
<dbReference type="HAMAP" id="MF_01123">
    <property type="entry name" value="Ac_CoA_synth"/>
    <property type="match status" value="1"/>
</dbReference>
<dbReference type="InterPro" id="IPR011904">
    <property type="entry name" value="Ac_CoA_lig"/>
</dbReference>
<dbReference type="InterPro" id="IPR032387">
    <property type="entry name" value="ACAS_N"/>
</dbReference>
<dbReference type="InterPro" id="IPR025110">
    <property type="entry name" value="AMP-bd_C"/>
</dbReference>
<dbReference type="InterPro" id="IPR045851">
    <property type="entry name" value="AMP-bd_C_sf"/>
</dbReference>
<dbReference type="InterPro" id="IPR020845">
    <property type="entry name" value="AMP-binding_CS"/>
</dbReference>
<dbReference type="InterPro" id="IPR000873">
    <property type="entry name" value="AMP-dep_synth/lig_dom"/>
</dbReference>
<dbReference type="InterPro" id="IPR042099">
    <property type="entry name" value="ANL_N_sf"/>
</dbReference>
<dbReference type="NCBIfam" id="TIGR02188">
    <property type="entry name" value="Ac_CoA_lig_AcsA"/>
    <property type="match status" value="1"/>
</dbReference>
<dbReference type="NCBIfam" id="NF001208">
    <property type="entry name" value="PRK00174.1"/>
    <property type="match status" value="1"/>
</dbReference>
<dbReference type="PANTHER" id="PTHR24095">
    <property type="entry name" value="ACETYL-COENZYME A SYNTHETASE"/>
    <property type="match status" value="1"/>
</dbReference>
<dbReference type="PANTHER" id="PTHR24095:SF14">
    <property type="entry name" value="ACETYL-COENZYME A SYNTHETASE 1"/>
    <property type="match status" value="1"/>
</dbReference>
<dbReference type="Pfam" id="PF16177">
    <property type="entry name" value="ACAS_N"/>
    <property type="match status" value="1"/>
</dbReference>
<dbReference type="Pfam" id="PF00501">
    <property type="entry name" value="AMP-binding"/>
    <property type="match status" value="1"/>
</dbReference>
<dbReference type="Pfam" id="PF13193">
    <property type="entry name" value="AMP-binding_C"/>
    <property type="match status" value="1"/>
</dbReference>
<dbReference type="SUPFAM" id="SSF56801">
    <property type="entry name" value="Acetyl-CoA synthetase-like"/>
    <property type="match status" value="1"/>
</dbReference>
<dbReference type="PROSITE" id="PS00455">
    <property type="entry name" value="AMP_BINDING"/>
    <property type="match status" value="1"/>
</dbReference>
<name>ACSA_METFK</name>
<gene>
    <name evidence="1" type="primary">acsA</name>
    <name type="ordered locus">Mfla_1727</name>
</gene>
<keyword id="KW-0007">Acetylation</keyword>
<keyword id="KW-0067">ATP-binding</keyword>
<keyword id="KW-0436">Ligase</keyword>
<keyword id="KW-0460">Magnesium</keyword>
<keyword id="KW-0479">Metal-binding</keyword>
<keyword id="KW-0547">Nucleotide-binding</keyword>
<keyword id="KW-1185">Reference proteome</keyword>
<feature type="chain" id="PRO_1000065297" description="Acetyl-coenzyme A synthetase">
    <location>
        <begin position="1"/>
        <end position="654"/>
    </location>
</feature>
<feature type="binding site" evidence="1">
    <location>
        <begin position="196"/>
        <end position="199"/>
    </location>
    <ligand>
        <name>CoA</name>
        <dbReference type="ChEBI" id="CHEBI:57287"/>
    </ligand>
</feature>
<feature type="binding site" evidence="1">
    <location>
        <position position="316"/>
    </location>
    <ligand>
        <name>CoA</name>
        <dbReference type="ChEBI" id="CHEBI:57287"/>
    </ligand>
</feature>
<feature type="binding site" evidence="1">
    <location>
        <begin position="392"/>
        <end position="394"/>
    </location>
    <ligand>
        <name>ATP</name>
        <dbReference type="ChEBI" id="CHEBI:30616"/>
    </ligand>
</feature>
<feature type="binding site" evidence="1">
    <location>
        <begin position="416"/>
        <end position="421"/>
    </location>
    <ligand>
        <name>ATP</name>
        <dbReference type="ChEBI" id="CHEBI:30616"/>
    </ligand>
</feature>
<feature type="binding site" evidence="1">
    <location>
        <position position="506"/>
    </location>
    <ligand>
        <name>ATP</name>
        <dbReference type="ChEBI" id="CHEBI:30616"/>
    </ligand>
</feature>
<feature type="binding site" evidence="1">
    <location>
        <position position="521"/>
    </location>
    <ligand>
        <name>ATP</name>
        <dbReference type="ChEBI" id="CHEBI:30616"/>
    </ligand>
</feature>
<feature type="binding site" evidence="1">
    <location>
        <position position="529"/>
    </location>
    <ligand>
        <name>CoA</name>
        <dbReference type="ChEBI" id="CHEBI:57287"/>
    </ligand>
</feature>
<feature type="binding site" evidence="1">
    <location>
        <position position="532"/>
    </location>
    <ligand>
        <name>ATP</name>
        <dbReference type="ChEBI" id="CHEBI:30616"/>
    </ligand>
</feature>
<feature type="binding site" evidence="1">
    <location>
        <position position="543"/>
    </location>
    <ligand>
        <name>Mg(2+)</name>
        <dbReference type="ChEBI" id="CHEBI:18420"/>
    </ligand>
</feature>
<feature type="binding site" evidence="1">
    <location>
        <position position="548"/>
    </location>
    <ligand>
        <name>Mg(2+)</name>
        <dbReference type="ChEBI" id="CHEBI:18420"/>
    </ligand>
</feature>
<feature type="modified residue" description="N6-acetyllysine" evidence="1">
    <location>
        <position position="618"/>
    </location>
</feature>
<accession>Q1H0J2</accession>
<reference key="1">
    <citation type="submission" date="2006-03" db="EMBL/GenBank/DDBJ databases">
        <title>Complete sequence of Methylobacillus flagellatus KT.</title>
        <authorList>
            <consortium name="US DOE Joint Genome Institute"/>
            <person name="Copeland A."/>
            <person name="Lucas S."/>
            <person name="Lapidus A."/>
            <person name="Barry K."/>
            <person name="Detter J.C."/>
            <person name="Glavina del Rio T."/>
            <person name="Hammon N."/>
            <person name="Israni S."/>
            <person name="Dalin E."/>
            <person name="Tice H."/>
            <person name="Pitluck S."/>
            <person name="Brettin T."/>
            <person name="Bruce D."/>
            <person name="Han C."/>
            <person name="Tapia R."/>
            <person name="Saunders E."/>
            <person name="Gilna P."/>
            <person name="Schmutz J."/>
            <person name="Larimer F."/>
            <person name="Land M."/>
            <person name="Kyrpides N."/>
            <person name="Anderson I."/>
            <person name="Richardson P."/>
        </authorList>
    </citation>
    <scope>NUCLEOTIDE SEQUENCE [LARGE SCALE GENOMIC DNA]</scope>
    <source>
        <strain>ATCC 51484 / DSM 6875 / VKM B-1610 / KT</strain>
    </source>
</reference>
<proteinExistence type="inferred from homology"/>
<sequence length="654" mass="72141">MSSIESVLTETRVFAPHETFRQAATVSGLPGYQALCDAAEQDYTGFWANLARQEISWQTPFTEVLDESNAPFYRWFADGKLNASYNCIDRHLEKRANKIALIFEADNGDVANITYRELHQRVCRFANALKKQGVGLGDRVIIYLPMSIEAIVAMQACARIGAIHSVVFGGFSAKSLHERIVDVGAKLVITADAGIRGGKQVALKASVDEALELGGCESVEKVIVYQRTGVDIAWNPHRDAWWHEVEAAENDNCEPVWVDAEHPLFILYTSGSTGTPKGVQHSTGGYLLGAIMSMKWVFDHKATDIFWCTADVGWITGHSYVAYGPLALGSTQVVFEGVPTYPDAGRFWQMIERHKVSIFYTAPTAIRSLIKLGGDLPHKYDLSSLRLLGTVGEPINPEAWMWYYKVVGKERCPIADTWWQTETGAHMIAPLPGAIDLKPGSCTRPLPGIIMDIVEEDGTHIEGTGGGLLVVKKPWPSMIRNIWGNPERFRKAYFPEELNGLYLAGDSAHRDEDGYFWIMGRIDDVLNVSGHRLGTMEIESALVANPLVAEAAIVGKPHDIKGESIVAYVVLKGERPEGEAAKTIAGQLREWVGKEIGPIAKPDEIRFGENLPKTRSGKIMRRLLRSLAKGEEITSDISTLDNPAILDQLRQSAG</sequence>